<name>L_ABLVH</name>
<gene>
    <name type="primary">L</name>
</gene>
<proteinExistence type="inferred from homology"/>
<keyword id="KW-0067">ATP-binding</keyword>
<keyword id="KW-1035">Host cytoplasm</keyword>
<keyword id="KW-0378">Hydrolase</keyword>
<keyword id="KW-0489">Methyltransferase</keyword>
<keyword id="KW-0506">mRNA capping</keyword>
<keyword id="KW-0507">mRNA processing</keyword>
<keyword id="KW-0511">Multifunctional enzyme</keyword>
<keyword id="KW-0547">Nucleotide-binding</keyword>
<keyword id="KW-0548">Nucleotidyltransferase</keyword>
<keyword id="KW-0696">RNA-directed RNA polymerase</keyword>
<keyword id="KW-0949">S-adenosyl-L-methionine</keyword>
<keyword id="KW-0808">Transferase</keyword>
<keyword id="KW-0693">Viral RNA replication</keyword>
<keyword id="KW-0946">Virion</keyword>
<feature type="chain" id="PRO_0000294414" description="Large structural protein">
    <location>
        <begin position="1"/>
        <end position="2127"/>
    </location>
</feature>
<feature type="domain" description="RdRp catalytic" evidence="4">
    <location>
        <begin position="611"/>
        <end position="799"/>
    </location>
</feature>
<feature type="domain" description="Mononegavirus-type SAM-dependent 2'-O-MTase" evidence="5">
    <location>
        <begin position="1674"/>
        <end position="1871"/>
    </location>
</feature>
<feature type="region of interest" description="Interaction with P protein" evidence="1">
    <location>
        <begin position="1562"/>
        <end position="2127"/>
    </location>
</feature>
<accession>Q8JTG9</accession>
<comment type="function">
    <text evidence="2">RNA-directed RNA polymerase that catalyzes the transcription of viral mRNAs, their capping and polyadenylation. The template is composed of the viral RNA tightly encapsidated by the nucleoprotein (N). The viral polymerase binds to the genomic RNA at the 3' leader promoter, and transcribes subsequently all viral mRNAs with a decreasing efficiency. The first gene is the most transcribed, and the last the least transcribed. The viral phosphoprotein acts as a processivity factor. Capping is concomitant with initiation of mRNA transcription. Indeed, a GDP polyribonucleotidyl transferase (PRNTase) adds the cap structure when the nascent RNA chain length has reached few nucleotides. Ribose 2'-O methylation of viral mRNA cap precedes and facilitates subsequent guanine-N-7 methylation, both activities being carried by the viral polymerase. Polyadenylation of mRNAs occur by a stuttering mechanism at a slipery stop site present at the end viral genes. After finishing transcription of a mRNA, the polymerase can resume transcription of the downstream gene.</text>
</comment>
<comment type="function">
    <text evidence="2">RNA-directed RNA polymerase that catalyzes the replication of viral genomic RNA. The template is composed of the viral RNA tightly encapsidated by the nucleoprotein (N). The replicase mode is dependent on intracellular N protein concentration. In this mode, the polymerase replicates the whole viral genome without recognizing transcriptional signals, and the replicated genome is not caped or polyadenylated.</text>
</comment>
<comment type="catalytic activity">
    <reaction evidence="4">
        <text>RNA(n) + a ribonucleoside 5'-triphosphate = RNA(n+1) + diphosphate</text>
        <dbReference type="Rhea" id="RHEA:21248"/>
        <dbReference type="Rhea" id="RHEA-COMP:14527"/>
        <dbReference type="Rhea" id="RHEA-COMP:17342"/>
        <dbReference type="ChEBI" id="CHEBI:33019"/>
        <dbReference type="ChEBI" id="CHEBI:61557"/>
        <dbReference type="ChEBI" id="CHEBI:140395"/>
        <dbReference type="EC" id="2.7.7.48"/>
    </reaction>
</comment>
<comment type="catalytic activity">
    <reaction evidence="2">
        <text>a 5'-end (5'-triphosphoguanosine)-adenylyl-adenylyl-cytidylyl-adenosine in mRNA + 2 S-adenosyl-L-methionine = a 5'-end (N(7)-methyl 5'-triphosphoguanosine)-(2'-O-methyladenylyl)-adenylyl-cytidylyl-adenosine in mRNA + 2 S-adenosyl-L-homocysteine + H(+)</text>
        <dbReference type="Rhea" id="RHEA:65376"/>
        <dbReference type="Rhea" id="RHEA-COMP:16797"/>
        <dbReference type="Rhea" id="RHEA-COMP:16798"/>
        <dbReference type="ChEBI" id="CHEBI:15378"/>
        <dbReference type="ChEBI" id="CHEBI:57856"/>
        <dbReference type="ChEBI" id="CHEBI:59789"/>
        <dbReference type="ChEBI" id="CHEBI:156483"/>
        <dbReference type="ChEBI" id="CHEBI:156484"/>
        <dbReference type="EC" id="2.1.1.375"/>
    </reaction>
</comment>
<comment type="catalytic activity">
    <reaction evidence="2">
        <text>a 5'-end (5'-triphosphoguanosine)-adenylyl-adenylyl-cytidylyl-adenosine in mRNA + S-adenosyl-L-methionine = a 5'-end (5'-triphosphoguanosine)-(2'-O-methyladenylyl)-adenylyl-cytidylyl-adenosine in mRNA + S-adenosyl-L-homocysteine + H(+)</text>
        <dbReference type="Rhea" id="RHEA:65380"/>
        <dbReference type="Rhea" id="RHEA-COMP:16797"/>
        <dbReference type="Rhea" id="RHEA-COMP:16801"/>
        <dbReference type="ChEBI" id="CHEBI:15378"/>
        <dbReference type="ChEBI" id="CHEBI:57856"/>
        <dbReference type="ChEBI" id="CHEBI:59789"/>
        <dbReference type="ChEBI" id="CHEBI:156482"/>
        <dbReference type="ChEBI" id="CHEBI:156484"/>
    </reaction>
</comment>
<comment type="catalytic activity">
    <reaction evidence="3">
        <text>a 5'-end triphospho-adenylyl-adenylyl-cytidylyl-adenosine in mRNA + GDP + H(+) = a 5'-end (5'-triphosphoguanosine)-adenylyl-adenylyl-cytidylyl-adenosine in mRNA + diphosphate</text>
        <dbReference type="Rhea" id="RHEA:65436"/>
        <dbReference type="Rhea" id="RHEA-COMP:16797"/>
        <dbReference type="Rhea" id="RHEA-COMP:16799"/>
        <dbReference type="ChEBI" id="CHEBI:15378"/>
        <dbReference type="ChEBI" id="CHEBI:33019"/>
        <dbReference type="ChEBI" id="CHEBI:58189"/>
        <dbReference type="ChEBI" id="CHEBI:156484"/>
        <dbReference type="ChEBI" id="CHEBI:156503"/>
        <dbReference type="EC" id="2.7.7.88"/>
    </reaction>
</comment>
<comment type="catalytic activity">
    <reaction evidence="2">
        <text>a 5'-end (5'-triphosphoguanosine)-(2'-O-methyladenylyl)-adenylyl-cytidylyl-adenosine in mRNA + S-adenosyl-L-methionine = a 5'-end (N(7)-methyl 5'-triphosphoguanosine)-(2'-O-methyladenylyl)-adenylyl-cytidylyl-adenosine in mRNA + S-adenosyl-L-homocysteine</text>
        <dbReference type="Rhea" id="RHEA:65440"/>
        <dbReference type="Rhea" id="RHEA-COMP:16798"/>
        <dbReference type="Rhea" id="RHEA-COMP:16801"/>
        <dbReference type="ChEBI" id="CHEBI:57856"/>
        <dbReference type="ChEBI" id="CHEBI:59789"/>
        <dbReference type="ChEBI" id="CHEBI:156482"/>
        <dbReference type="ChEBI" id="CHEBI:156483"/>
    </reaction>
</comment>
<comment type="catalytic activity">
    <reaction evidence="3">
        <text>GTP + H2O = GDP + phosphate + H(+)</text>
        <dbReference type="Rhea" id="RHEA:19669"/>
        <dbReference type="ChEBI" id="CHEBI:15377"/>
        <dbReference type="ChEBI" id="CHEBI:15378"/>
        <dbReference type="ChEBI" id="CHEBI:37565"/>
        <dbReference type="ChEBI" id="CHEBI:43474"/>
        <dbReference type="ChEBI" id="CHEBI:58189"/>
    </reaction>
</comment>
<comment type="subunit">
    <text evidence="2">May form homodimer. Interacts with the P protein.</text>
</comment>
<comment type="subcellular location">
    <subcellularLocation>
        <location evidence="2">Virion</location>
    </subcellularLocation>
    <subcellularLocation>
        <location evidence="2">Host cytoplasm</location>
    </subcellularLocation>
    <text evidence="2">L and P are packaged asymmetrically towards the blunt end of the virus.</text>
</comment>
<comment type="similarity">
    <text evidence="6">Belongs to the rhabdoviruses protein L family.</text>
</comment>
<sequence length="2127" mass="242676">MIDPGEVYDDPIDPVEPEPELKNNTVIPNILRNSDYNLNSPLIEDSARLMLEWLTTGNRPGRLTLTDNCIRSYKTLKCYFRKVDVGSLKVGGLAAQAMISLWLHGEHSESNRSRKCLSDLTQFYQKSSPIEKLLNYTLGNRGLRIPPEGVLFCLKKVDYDRAFGRYLANIYASYLFFHVIILYMNALDWDEEKTILALWKDLSSVDIKKDQVKFRDPIWGSLIVTKDFVYSQNANCLFDRNYTLMLKDLFLSRFNSLLILLSPPEPRYSDDLISQLCQLYIAGDNVLSMCGNSGYDVIKMLEPYVVNSLVQRAEGFRPLIHSLGDFPLFIRDKVGQLEGTFGPSARKFFQVLDQFDNIHDLVFVYGCYRHWGHPYIDYRKGLSKLYDQVHIKKVIDGTYQECLASDLAKRVLRWGFDKYSKWYLDPKLLAQDHPLTPYIRTQTWPPKHIVDLVGNTWHRLPITQIFEIPESMDPSEILDDKSHSLTRTKLASWLAENRGGPVPSEKVIITALSKPPVNPREFLKSIDLGGLPDDDLIIGLKPKERELKIEGRFFALMSWNLRLYFVITEKLLANYILPLFDALTMTDNLNKVFKKLIDRVTGQGLQDYSRVTYAFHLDYEKWNNHQRLESTKDVFSVLDQVFGLKKVFSRTHEFFQKSWVYYSDRSDLIGLWEDQIYCLDMSDGPTCWNGQDGGLEGLRQKGWSLVSLLMIDRESQTRNTRTKILAQGDNQVLCPTYMLSSGLSQEGLLYELESISRNALSIYRAIEDGASKLGLIIKKEETMCSYDFLIYGKTPLFRGNILVPESKRWARVSCISNDQIVNLANIMSTVSTNALTVAQHSQSLIKPMRDFLLMSVQAVFHYLLFSPILKGRVYKILSADGDDFLLAMSRIIYLDPSLGGVSGMSLGRFHIRQFSDPVSEGLSFWKEIWSSSSEPWIHSLCQEAGNPDLGDRSLESFTRLLEDPTTLNIRGGASPTILLKDAIRKALYDEVDKVENSEFREAILLSKTHRDNFILFLKSIEPLFPRFLSELFSSSFLGIPESIIGLIQNSRTIRRQFRRSLSRSLEESFYNSEIHGINRMTQVPQRIGRVWSCSSERADLLREISWGRKVVGTTVPHPSEMLTLLPKSSISCVCGPTGSENPRVSVSVLPSFDQSFFSRGPLKGYLGSSTSMSTQLFHAWEKVTNVHVVKRALSLKESINWFIARDSNLAQTLIKNIISLTGPQFPLEEAPVFKRTGSALHRFKSARYSEGGYSSICPNLLSHISVSTDTMSDLTQDGRNFDFMFQPLMLYAQTWTSELVQKDIRLKDSTFHWHLRCQKCIRSIDDITLDTSQVFEFPDVSKRISRMVSGAVPQFQKLPEVYLKPGHFDSLCGKDKSRHIGSAQGLLYSILVATHDPGYNDGTIFPVNIYSKISPKDYLRGLARGVLIGSSICFLTRMTNININRPLELISGVISYILLRLDNHPSLYVMLRESSLRSEIFSIPQKIPAAYPTTMKEGNRSVLCYLQHVLRYERDIITSSPENDWLWIFSDFRSTKMTYLTLITYQSHILLQRIERSLSKKMRADLRQLSSLMRQVLGGHGEDSLDSGEDIQRLLRDALQRTRWVDQEVRHAAKTMTGDHSPSKKTSRKAGCSEWICSAQQVAISTSSNPAPVSEMDIRTLSRKLQNPLISGLRVVQWATGAHYKLKPILDDLNAYPSFCLVVGDGSGGISRTVLNMFPDAKLVFNSLLEVSDLMASGTHPLPPSAIMSGGDDIVSRVVDFESIWEKPSDLRNLSTWRYFQSVQSKLNMSYDLIICDAEVTDIISVNKITLLMSDFVLSIDGPLDLIFKSYGTMLVNPDYKAIQHLSRAFPKATGYITQLTSSFSSELYLRFSKRGKFFRDVEYLTSSTLREMSLVLFNCSSPKSELQRARSLNYQDLIRGFPEEIVSNPYNEMIITLIDSEVESFLVHKMVDDLELQRGTLSKMSIIIAIVIVYSNRVFNVSKPLSDPVFYPPSDPKILRHFNICCSTMLYLSTILGDVPNFARLHELYNSPITYYFKKQIIRGSIYLSWSWSDDTSVFKRVSCNSNLSLSSHWIRLIYKIIKTTRFTGSHVDLSKEVEKHLKGYNRWITFNDVRSRSSLLDYSCL</sequence>
<evidence type="ECO:0000250" key="1"/>
<evidence type="ECO:0000250" key="2">
    <source>
        <dbReference type="UniProtKB" id="P03523"/>
    </source>
</evidence>
<evidence type="ECO:0000250" key="3">
    <source>
        <dbReference type="UniProtKB" id="P28887"/>
    </source>
</evidence>
<evidence type="ECO:0000255" key="4">
    <source>
        <dbReference type="PROSITE-ProRule" id="PRU00539"/>
    </source>
</evidence>
<evidence type="ECO:0000255" key="5">
    <source>
        <dbReference type="PROSITE-ProRule" id="PRU00923"/>
    </source>
</evidence>
<evidence type="ECO:0000305" key="6"/>
<reference key="1">
    <citation type="journal article" date="2002" name="Virology">
        <title>Sequence analysis of an isolate from a fatal human infection of Australian bat lyssavirus.</title>
        <authorList>
            <person name="Warrilow D."/>
            <person name="Smith I.L."/>
            <person name="Harrower B."/>
            <person name="Smith G.A."/>
        </authorList>
    </citation>
    <scope>NUCLEOTIDE SEQUENCE [GENOMIC RNA]</scope>
</reference>
<protein>
    <recommendedName>
        <fullName>Large structural protein</fullName>
        <shortName>Protein L</shortName>
    </recommendedName>
    <alternativeName>
        <fullName>Replicase</fullName>
    </alternativeName>
    <alternativeName>
        <fullName>Transcriptase</fullName>
    </alternativeName>
    <domain>
        <recommendedName>
            <fullName>RNA-directed RNA polymerase</fullName>
            <ecNumber evidence="3">2.7.7.48</ecNumber>
        </recommendedName>
    </domain>
    <domain>
        <recommendedName>
            <fullName evidence="2">GTP phosphohydrolase</fullName>
            <ecNumber evidence="2">3.6.1.-</ecNumber>
        </recommendedName>
    </domain>
    <domain>
        <recommendedName>
            <fullName evidence="6">GDP polyribonucleotidyltransferase</fullName>
            <ecNumber evidence="2">2.7.7.88</ecNumber>
        </recommendedName>
        <alternativeName>
            <fullName evidence="6">PRNTase</fullName>
        </alternativeName>
    </domain>
    <domain>
        <recommendedName>
            <fullName evidence="6">mRNA cap methyltransferase</fullName>
            <ecNumber evidence="2">2.1.1.375</ecNumber>
        </recommendedName>
        <alternativeName>
            <fullName evidence="2">mRNA (guanine-N(7)-)-methyltransferase</fullName>
            <shortName evidence="2">G-N7-MTase</shortName>
        </alternativeName>
        <alternativeName>
            <fullName evidence="2">mRNA (nucleoside-2'-O-)-methyltransferase</fullName>
            <shortName evidence="2">N1-2'-O-MTase</shortName>
        </alternativeName>
    </domain>
</protein>
<organismHost>
    <name type="scientific">Homo sapiens</name>
    <name type="common">Human</name>
    <dbReference type="NCBI Taxonomy" id="9606"/>
</organismHost>
<organismHost>
    <name type="scientific">Pteropus alecto</name>
    <name type="common">Black flying fox</name>
    <dbReference type="NCBI Taxonomy" id="9402"/>
</organismHost>
<organismHost>
    <name type="scientific">Pteropus conspicillatus</name>
    <name type="common">Spectacled flying fox</name>
    <dbReference type="NCBI Taxonomy" id="328804"/>
</organismHost>
<organismHost>
    <name type="scientific">Pteropus poliocephalus</name>
    <name type="common">Grey-headed flying fox</name>
    <dbReference type="NCBI Taxonomy" id="9403"/>
</organismHost>
<organismHost>
    <name type="scientific">Pteropus scapulatus</name>
    <name type="common">Little red flying fox</name>
    <dbReference type="NCBI Taxonomy" id="94117"/>
</organismHost>
<organismHost>
    <name type="scientific">Saccolaimus</name>
    <dbReference type="NCBI Taxonomy" id="446909"/>
</organismHost>
<dbReference type="EC" id="2.7.7.48" evidence="3"/>
<dbReference type="EC" id="3.6.1.-" evidence="2"/>
<dbReference type="EC" id="2.7.7.88" evidence="2"/>
<dbReference type="EC" id="2.1.1.375" evidence="2"/>
<dbReference type="EMBL" id="AF418014">
    <property type="protein sequence ID" value="AAN05310.1"/>
    <property type="molecule type" value="Genomic_RNA"/>
</dbReference>
<dbReference type="SMR" id="Q8JTG9"/>
<dbReference type="Proteomes" id="UP000006884">
    <property type="component" value="Genome"/>
</dbReference>
<dbReference type="GO" id="GO:0030430">
    <property type="term" value="C:host cell cytoplasm"/>
    <property type="evidence" value="ECO:0007669"/>
    <property type="project" value="UniProtKB-SubCell"/>
</dbReference>
<dbReference type="GO" id="GO:0044423">
    <property type="term" value="C:virion component"/>
    <property type="evidence" value="ECO:0007669"/>
    <property type="project" value="UniProtKB-KW"/>
</dbReference>
<dbReference type="GO" id="GO:0005524">
    <property type="term" value="F:ATP binding"/>
    <property type="evidence" value="ECO:0007669"/>
    <property type="project" value="UniProtKB-KW"/>
</dbReference>
<dbReference type="GO" id="GO:0003924">
    <property type="term" value="F:GTPase activity"/>
    <property type="evidence" value="ECO:0007669"/>
    <property type="project" value="RHEA"/>
</dbReference>
<dbReference type="GO" id="GO:0004482">
    <property type="term" value="F:mRNA 5'-cap (guanine-N7-)-methyltransferase activity"/>
    <property type="evidence" value="ECO:0007669"/>
    <property type="project" value="InterPro"/>
</dbReference>
<dbReference type="GO" id="GO:0003968">
    <property type="term" value="F:RNA-directed RNA polymerase activity"/>
    <property type="evidence" value="ECO:0007669"/>
    <property type="project" value="UniProtKB-KW"/>
</dbReference>
<dbReference type="GO" id="GO:0039689">
    <property type="term" value="P:negative stranded viral RNA replication"/>
    <property type="evidence" value="ECO:0000250"/>
    <property type="project" value="UniProtKB"/>
</dbReference>
<dbReference type="InterPro" id="IPR039530">
    <property type="entry name" value="L_methyltransferase_rhabdo"/>
</dbReference>
<dbReference type="InterPro" id="IPR039736">
    <property type="entry name" value="L_poly_C"/>
</dbReference>
<dbReference type="InterPro" id="IPR048398">
    <property type="entry name" value="Methyltrans_Mon_C"/>
</dbReference>
<dbReference type="InterPro" id="IPR048397">
    <property type="entry name" value="Methyltrans_Mon_CD"/>
</dbReference>
<dbReference type="InterPro" id="IPR026890">
    <property type="entry name" value="Mononeg_mRNAcap"/>
</dbReference>
<dbReference type="InterPro" id="IPR014023">
    <property type="entry name" value="Mononeg_RNA_pol_cat"/>
</dbReference>
<dbReference type="InterPro" id="IPR025786">
    <property type="entry name" value="Mononega_L_MeTrfase"/>
</dbReference>
<dbReference type="InterPro" id="IPR017234">
    <property type="entry name" value="RNA-dir_pol_rhabdovirus"/>
</dbReference>
<dbReference type="NCBIfam" id="TIGR04198">
    <property type="entry name" value="paramyx_RNAcap"/>
    <property type="match status" value="1"/>
</dbReference>
<dbReference type="Pfam" id="PF21080">
    <property type="entry name" value="Methyltrans_Mon_1st"/>
    <property type="match status" value="1"/>
</dbReference>
<dbReference type="Pfam" id="PF14314">
    <property type="entry name" value="Methyltrans_Mon_2nd"/>
    <property type="match status" value="1"/>
</dbReference>
<dbReference type="Pfam" id="PF21081">
    <property type="entry name" value="Methyltrans_Mon_3rd"/>
    <property type="match status" value="1"/>
</dbReference>
<dbReference type="Pfam" id="PF14318">
    <property type="entry name" value="Mononeg_mRNAcap"/>
    <property type="match status" value="1"/>
</dbReference>
<dbReference type="Pfam" id="PF00946">
    <property type="entry name" value="Mononeg_RNA_pol"/>
    <property type="match status" value="1"/>
</dbReference>
<dbReference type="PIRSF" id="PIRSF037546">
    <property type="entry name" value="RNA_pol_RhabdoV_sub"/>
    <property type="match status" value="1"/>
</dbReference>
<dbReference type="PROSITE" id="PS50526">
    <property type="entry name" value="RDRP_SSRNA_NEG_NONSEG"/>
    <property type="match status" value="1"/>
</dbReference>
<dbReference type="PROSITE" id="PS51590">
    <property type="entry name" value="SAM_MT_MNV_L"/>
    <property type="match status" value="1"/>
</dbReference>
<organism>
    <name type="scientific">Australian bat lyssavirus (isolate Human/AUS/1998)</name>
    <name type="common">ABLV</name>
    <dbReference type="NCBI Taxonomy" id="446562"/>
    <lineage>
        <taxon>Viruses</taxon>
        <taxon>Riboviria</taxon>
        <taxon>Orthornavirae</taxon>
        <taxon>Negarnaviricota</taxon>
        <taxon>Haploviricotina</taxon>
        <taxon>Monjiviricetes</taxon>
        <taxon>Mononegavirales</taxon>
        <taxon>Rhabdoviridae</taxon>
        <taxon>Alpharhabdovirinae</taxon>
        <taxon>Lyssavirus</taxon>
        <taxon>Lyssavirus australis</taxon>
    </lineage>
</organism>